<dbReference type="EC" id="6.1.1.16" evidence="1"/>
<dbReference type="EMBL" id="AE015450">
    <property type="protein sequence ID" value="AAP57029.2"/>
    <property type="molecule type" value="Genomic_DNA"/>
</dbReference>
<dbReference type="RefSeq" id="WP_011113940.1">
    <property type="nucleotide sequence ID" value="NC_004829.2"/>
</dbReference>
<dbReference type="SMR" id="Q7NAH7"/>
<dbReference type="KEGG" id="mga:MGA_0533"/>
<dbReference type="PATRIC" id="fig|233150.7.peg.758"/>
<dbReference type="HOGENOM" id="CLU_013528_0_0_14"/>
<dbReference type="OrthoDB" id="9815130at2"/>
<dbReference type="Proteomes" id="UP000001418">
    <property type="component" value="Chromosome"/>
</dbReference>
<dbReference type="GO" id="GO:0005829">
    <property type="term" value="C:cytosol"/>
    <property type="evidence" value="ECO:0007669"/>
    <property type="project" value="TreeGrafter"/>
</dbReference>
<dbReference type="GO" id="GO:0005524">
    <property type="term" value="F:ATP binding"/>
    <property type="evidence" value="ECO:0007669"/>
    <property type="project" value="UniProtKB-UniRule"/>
</dbReference>
<dbReference type="GO" id="GO:0004817">
    <property type="term" value="F:cysteine-tRNA ligase activity"/>
    <property type="evidence" value="ECO:0007669"/>
    <property type="project" value="UniProtKB-UniRule"/>
</dbReference>
<dbReference type="GO" id="GO:0008270">
    <property type="term" value="F:zinc ion binding"/>
    <property type="evidence" value="ECO:0007669"/>
    <property type="project" value="UniProtKB-UniRule"/>
</dbReference>
<dbReference type="GO" id="GO:0006423">
    <property type="term" value="P:cysteinyl-tRNA aminoacylation"/>
    <property type="evidence" value="ECO:0007669"/>
    <property type="project" value="UniProtKB-UniRule"/>
</dbReference>
<dbReference type="CDD" id="cd00672">
    <property type="entry name" value="CysRS_core"/>
    <property type="match status" value="1"/>
</dbReference>
<dbReference type="Gene3D" id="1.20.120.1910">
    <property type="entry name" value="Cysteine-tRNA ligase, C-terminal anti-codon recognition domain"/>
    <property type="match status" value="1"/>
</dbReference>
<dbReference type="Gene3D" id="3.40.50.620">
    <property type="entry name" value="HUPs"/>
    <property type="match status" value="1"/>
</dbReference>
<dbReference type="HAMAP" id="MF_00041">
    <property type="entry name" value="Cys_tRNA_synth"/>
    <property type="match status" value="1"/>
</dbReference>
<dbReference type="InterPro" id="IPR015803">
    <property type="entry name" value="Cys-tRNA-ligase"/>
</dbReference>
<dbReference type="InterPro" id="IPR024909">
    <property type="entry name" value="Cys-tRNA/MSH_ligase"/>
</dbReference>
<dbReference type="InterPro" id="IPR014729">
    <property type="entry name" value="Rossmann-like_a/b/a_fold"/>
</dbReference>
<dbReference type="InterPro" id="IPR032678">
    <property type="entry name" value="tRNA-synt_1_cat_dom"/>
</dbReference>
<dbReference type="InterPro" id="IPR009080">
    <property type="entry name" value="tRNAsynth_Ia_anticodon-bd"/>
</dbReference>
<dbReference type="NCBIfam" id="TIGR00435">
    <property type="entry name" value="cysS"/>
    <property type="match status" value="1"/>
</dbReference>
<dbReference type="PANTHER" id="PTHR10890:SF3">
    <property type="entry name" value="CYSTEINE--TRNA LIGASE, CYTOPLASMIC"/>
    <property type="match status" value="1"/>
</dbReference>
<dbReference type="PANTHER" id="PTHR10890">
    <property type="entry name" value="CYSTEINYL-TRNA SYNTHETASE"/>
    <property type="match status" value="1"/>
</dbReference>
<dbReference type="Pfam" id="PF01406">
    <property type="entry name" value="tRNA-synt_1e"/>
    <property type="match status" value="1"/>
</dbReference>
<dbReference type="PRINTS" id="PR00983">
    <property type="entry name" value="TRNASYNTHCYS"/>
</dbReference>
<dbReference type="SUPFAM" id="SSF47323">
    <property type="entry name" value="Anticodon-binding domain of a subclass of class I aminoacyl-tRNA synthetases"/>
    <property type="match status" value="1"/>
</dbReference>
<dbReference type="SUPFAM" id="SSF52374">
    <property type="entry name" value="Nucleotidylyl transferase"/>
    <property type="match status" value="1"/>
</dbReference>
<reference key="1">
    <citation type="journal article" date="2003" name="Microbiology">
        <title>The complete genome sequence of the avian pathogen Mycoplasma gallisepticum strain R(low).</title>
        <authorList>
            <person name="Papazisi L."/>
            <person name="Gorton T.S."/>
            <person name="Kutish G."/>
            <person name="Markham P.F."/>
            <person name="Browning G.F."/>
            <person name="Nguyen D.K."/>
            <person name="Swartzell S."/>
            <person name="Madan A."/>
            <person name="Mahairas G."/>
            <person name="Geary S.J."/>
        </authorList>
    </citation>
    <scope>NUCLEOTIDE SEQUENCE [LARGE SCALE GENOMIC DNA]</scope>
    <source>
        <strain>R(low / passage 15 / clone 2)</strain>
    </source>
</reference>
<keyword id="KW-0030">Aminoacyl-tRNA synthetase</keyword>
<keyword id="KW-0067">ATP-binding</keyword>
<keyword id="KW-0963">Cytoplasm</keyword>
<keyword id="KW-0436">Ligase</keyword>
<keyword id="KW-0479">Metal-binding</keyword>
<keyword id="KW-0547">Nucleotide-binding</keyword>
<keyword id="KW-0648">Protein biosynthesis</keyword>
<keyword id="KW-1185">Reference proteome</keyword>
<keyword id="KW-0862">Zinc</keyword>
<feature type="chain" id="PRO_0000159427" description="Cysteine--tRNA ligase">
    <location>
        <begin position="1"/>
        <end position="435"/>
    </location>
</feature>
<feature type="short sequence motif" description="'HIGH' region">
    <location>
        <begin position="26"/>
        <end position="36"/>
    </location>
</feature>
<feature type="short sequence motif" description="'KMSKS' region">
    <location>
        <begin position="260"/>
        <end position="264"/>
    </location>
</feature>
<feature type="binding site" evidence="1">
    <location>
        <position position="24"/>
    </location>
    <ligand>
        <name>Zn(2+)</name>
        <dbReference type="ChEBI" id="CHEBI:29105"/>
    </ligand>
</feature>
<feature type="binding site" evidence="1">
    <location>
        <position position="202"/>
    </location>
    <ligand>
        <name>Zn(2+)</name>
        <dbReference type="ChEBI" id="CHEBI:29105"/>
    </ligand>
</feature>
<feature type="binding site" evidence="1">
    <location>
        <position position="228"/>
    </location>
    <ligand>
        <name>Zn(2+)</name>
        <dbReference type="ChEBI" id="CHEBI:29105"/>
    </ligand>
</feature>
<feature type="binding site" evidence="1">
    <location>
        <position position="232"/>
    </location>
    <ligand>
        <name>Zn(2+)</name>
        <dbReference type="ChEBI" id="CHEBI:29105"/>
    </ligand>
</feature>
<feature type="binding site" evidence="1">
    <location>
        <position position="263"/>
    </location>
    <ligand>
        <name>ATP</name>
        <dbReference type="ChEBI" id="CHEBI:30616"/>
    </ligand>
</feature>
<protein>
    <recommendedName>
        <fullName evidence="1">Cysteine--tRNA ligase</fullName>
        <ecNumber evidence="1">6.1.1.16</ecNumber>
    </recommendedName>
    <alternativeName>
        <fullName evidence="1">Cysteinyl-tRNA synthetase</fullName>
        <shortName evidence="1">CysRS</shortName>
    </alternativeName>
</protein>
<name>SYC_MYCGA</name>
<proteinExistence type="inferred from homology"/>
<evidence type="ECO:0000255" key="1">
    <source>
        <dbReference type="HAMAP-Rule" id="MF_00041"/>
    </source>
</evidence>
<sequence length="435" mass="50776">MKLYDTLTKTNVDIDANEINIYVCGPTVYDHIHIGNLRPIVTFDVLRRLLEHSNKKVNFVHNLTDIDDKIINQAQRLNLSEEEVTKRYTSAYFEILDELNIKLPKIVKVTDVMSGIIKYIEKIYDKQYAYELDGDIYFDTTRIADYGVLSKRKLDEQISGIRVKSNENKTSPNDFVLWKKTVEGIKWNSRFGLGRPGWHTECAYIIDQEFKQKGFVIHGGGIDLVFPHHENENAQNLALHNKNLVNCWVHVGYLLIDNEKMSKSLNNFIYVKHLIESHNYRAIRWVFYNTAHTQPLNFDGTIIKAAQKDVEKIISTVNRFRTFLIANKNNIPSSSLVCEEFKKALFDNLNFANATKVIWDLIKVLNESIAYKKIDENIWAYQQLIWCLEIYGIVPDMIHNEQIIDQINQWSELLNNKDYEKADSIRNKLINKKVL</sequence>
<accession>Q7NAH7</accession>
<gene>
    <name evidence="1" type="primary">cysS</name>
    <name type="ordered locus">MYCGA6790</name>
    <name type="ORF">MGA_0533</name>
</gene>
<comment type="catalytic activity">
    <reaction evidence="1">
        <text>tRNA(Cys) + L-cysteine + ATP = L-cysteinyl-tRNA(Cys) + AMP + diphosphate</text>
        <dbReference type="Rhea" id="RHEA:17773"/>
        <dbReference type="Rhea" id="RHEA-COMP:9661"/>
        <dbReference type="Rhea" id="RHEA-COMP:9679"/>
        <dbReference type="ChEBI" id="CHEBI:30616"/>
        <dbReference type="ChEBI" id="CHEBI:33019"/>
        <dbReference type="ChEBI" id="CHEBI:35235"/>
        <dbReference type="ChEBI" id="CHEBI:78442"/>
        <dbReference type="ChEBI" id="CHEBI:78517"/>
        <dbReference type="ChEBI" id="CHEBI:456215"/>
        <dbReference type="EC" id="6.1.1.16"/>
    </reaction>
</comment>
<comment type="cofactor">
    <cofactor evidence="1">
        <name>Zn(2+)</name>
        <dbReference type="ChEBI" id="CHEBI:29105"/>
    </cofactor>
    <text evidence="1">Binds 1 zinc ion per subunit.</text>
</comment>
<comment type="subunit">
    <text evidence="1">Monomer.</text>
</comment>
<comment type="subcellular location">
    <subcellularLocation>
        <location evidence="1">Cytoplasm</location>
    </subcellularLocation>
</comment>
<comment type="similarity">
    <text evidence="1">Belongs to the class-I aminoacyl-tRNA synthetase family.</text>
</comment>
<organism>
    <name type="scientific">Mycoplasmoides gallisepticum (strain R(low / passage 15 / clone 2))</name>
    <name type="common">Mycoplasma gallisepticum</name>
    <dbReference type="NCBI Taxonomy" id="710127"/>
    <lineage>
        <taxon>Bacteria</taxon>
        <taxon>Bacillati</taxon>
        <taxon>Mycoplasmatota</taxon>
        <taxon>Mycoplasmoidales</taxon>
        <taxon>Mycoplasmoidaceae</taxon>
        <taxon>Mycoplasmoides</taxon>
    </lineage>
</organism>